<feature type="chain" id="PRO_1000165063" description="Glycogen debranching enzyme">
    <location>
        <begin position="1"/>
        <end position="658"/>
    </location>
</feature>
<feature type="region of interest" description="Disordered" evidence="2">
    <location>
        <begin position="459"/>
        <end position="484"/>
    </location>
</feature>
<feature type="active site" description="Nucleophile" evidence="1">
    <location>
        <position position="336"/>
    </location>
</feature>
<feature type="active site" description="Proton donor" evidence="1">
    <location>
        <position position="371"/>
    </location>
</feature>
<feature type="site" description="Transition state stabilizer" evidence="1">
    <location>
        <position position="443"/>
    </location>
</feature>
<organism>
    <name type="scientific">Salmonella paratyphi C (strain RKS4594)</name>
    <dbReference type="NCBI Taxonomy" id="476213"/>
    <lineage>
        <taxon>Bacteria</taxon>
        <taxon>Pseudomonadati</taxon>
        <taxon>Pseudomonadota</taxon>
        <taxon>Gammaproteobacteria</taxon>
        <taxon>Enterobacterales</taxon>
        <taxon>Enterobacteriaceae</taxon>
        <taxon>Salmonella</taxon>
    </lineage>
</organism>
<dbReference type="EC" id="3.2.1.196" evidence="1"/>
<dbReference type="EMBL" id="CP000857">
    <property type="protein sequence ID" value="ACN47688.1"/>
    <property type="molecule type" value="Genomic_DNA"/>
</dbReference>
<dbReference type="RefSeq" id="WP_000192491.1">
    <property type="nucleotide sequence ID" value="NC_012125.1"/>
</dbReference>
<dbReference type="SMR" id="C0Q0L1"/>
<dbReference type="CAZy" id="CBM48">
    <property type="family name" value="Carbohydrate-Binding Module Family 48"/>
</dbReference>
<dbReference type="CAZy" id="GH13">
    <property type="family name" value="Glycoside Hydrolase Family 13"/>
</dbReference>
<dbReference type="KEGG" id="sei:SPC_3606"/>
<dbReference type="HOGENOM" id="CLU_011725_1_1_6"/>
<dbReference type="UniPathway" id="UPA00165"/>
<dbReference type="Proteomes" id="UP000001599">
    <property type="component" value="Chromosome"/>
</dbReference>
<dbReference type="GO" id="GO:0004133">
    <property type="term" value="F:glycogen debranching enzyme activity"/>
    <property type="evidence" value="ECO:0007669"/>
    <property type="project" value="UniProtKB-UniRule"/>
</dbReference>
<dbReference type="GO" id="GO:0004553">
    <property type="term" value="F:hydrolase activity, hydrolyzing O-glycosyl compounds"/>
    <property type="evidence" value="ECO:0007669"/>
    <property type="project" value="InterPro"/>
</dbReference>
<dbReference type="GO" id="GO:0005980">
    <property type="term" value="P:glycogen catabolic process"/>
    <property type="evidence" value="ECO:0007669"/>
    <property type="project" value="UniProtKB-UniRule"/>
</dbReference>
<dbReference type="CDD" id="cd11326">
    <property type="entry name" value="AmyAc_Glg_debranch"/>
    <property type="match status" value="1"/>
</dbReference>
<dbReference type="CDD" id="cd02856">
    <property type="entry name" value="E_set_GDE_Isoamylase_N"/>
    <property type="match status" value="1"/>
</dbReference>
<dbReference type="FunFam" id="2.60.40.10:FF:000468">
    <property type="entry name" value="Glycogen debranching enzyme"/>
    <property type="match status" value="1"/>
</dbReference>
<dbReference type="Gene3D" id="3.20.20.80">
    <property type="entry name" value="Glycosidases"/>
    <property type="match status" value="1"/>
</dbReference>
<dbReference type="Gene3D" id="2.60.40.1180">
    <property type="entry name" value="Golgi alpha-mannosidase II"/>
    <property type="match status" value="1"/>
</dbReference>
<dbReference type="Gene3D" id="2.60.40.10">
    <property type="entry name" value="Immunoglobulins"/>
    <property type="match status" value="1"/>
</dbReference>
<dbReference type="HAMAP" id="MF_01248">
    <property type="entry name" value="GlgX"/>
    <property type="match status" value="1"/>
</dbReference>
<dbReference type="InterPro" id="IPR040784">
    <property type="entry name" value="GlgX_C"/>
</dbReference>
<dbReference type="InterPro" id="IPR044505">
    <property type="entry name" value="GlgX_Isoamylase_N_E_set"/>
</dbReference>
<dbReference type="InterPro" id="IPR006047">
    <property type="entry name" value="Glyco_hydro_13_cat_dom"/>
</dbReference>
<dbReference type="InterPro" id="IPR004193">
    <property type="entry name" value="Glyco_hydro_13_N"/>
</dbReference>
<dbReference type="InterPro" id="IPR013780">
    <property type="entry name" value="Glyco_hydro_b"/>
</dbReference>
<dbReference type="InterPro" id="IPR022844">
    <property type="entry name" value="Glycogen_debranch_bac"/>
</dbReference>
<dbReference type="InterPro" id="IPR011837">
    <property type="entry name" value="Glycogen_debranch_GlgX"/>
</dbReference>
<dbReference type="InterPro" id="IPR017853">
    <property type="entry name" value="Glycoside_hydrolase_SF"/>
</dbReference>
<dbReference type="InterPro" id="IPR013783">
    <property type="entry name" value="Ig-like_fold"/>
</dbReference>
<dbReference type="InterPro" id="IPR014756">
    <property type="entry name" value="Ig_E-set"/>
</dbReference>
<dbReference type="NCBIfam" id="TIGR02100">
    <property type="entry name" value="glgX_debranch"/>
    <property type="match status" value="1"/>
</dbReference>
<dbReference type="NCBIfam" id="NF002983">
    <property type="entry name" value="PRK03705.1"/>
    <property type="match status" value="1"/>
</dbReference>
<dbReference type="PANTHER" id="PTHR43002">
    <property type="entry name" value="GLYCOGEN DEBRANCHING ENZYME"/>
    <property type="match status" value="1"/>
</dbReference>
<dbReference type="Pfam" id="PF00128">
    <property type="entry name" value="Alpha-amylase"/>
    <property type="match status" value="1"/>
</dbReference>
<dbReference type="Pfam" id="PF02922">
    <property type="entry name" value="CBM_48"/>
    <property type="match status" value="1"/>
</dbReference>
<dbReference type="Pfam" id="PF18390">
    <property type="entry name" value="GlgX_C"/>
    <property type="match status" value="1"/>
</dbReference>
<dbReference type="SMART" id="SM00642">
    <property type="entry name" value="Aamy"/>
    <property type="match status" value="1"/>
</dbReference>
<dbReference type="SUPFAM" id="SSF51445">
    <property type="entry name" value="(Trans)glycosidases"/>
    <property type="match status" value="1"/>
</dbReference>
<dbReference type="SUPFAM" id="SSF81296">
    <property type="entry name" value="E set domains"/>
    <property type="match status" value="1"/>
</dbReference>
<name>GLGX_SALPC</name>
<proteinExistence type="inferred from homology"/>
<evidence type="ECO:0000255" key="1">
    <source>
        <dbReference type="HAMAP-Rule" id="MF_01248"/>
    </source>
</evidence>
<evidence type="ECO:0000256" key="2">
    <source>
        <dbReference type="SAM" id="MobiDB-lite"/>
    </source>
</evidence>
<reference key="1">
    <citation type="journal article" date="2009" name="PLoS ONE">
        <title>Salmonella paratyphi C: genetic divergence from Salmonella choleraesuis and pathogenic convergence with Salmonella typhi.</title>
        <authorList>
            <person name="Liu W.-Q."/>
            <person name="Feng Y."/>
            <person name="Wang Y."/>
            <person name="Zou Q.-H."/>
            <person name="Chen F."/>
            <person name="Guo J.-T."/>
            <person name="Peng Y.-H."/>
            <person name="Jin Y."/>
            <person name="Li Y.-G."/>
            <person name="Hu S.-N."/>
            <person name="Johnston R.N."/>
            <person name="Liu G.-R."/>
            <person name="Liu S.-L."/>
        </authorList>
    </citation>
    <scope>NUCLEOTIDE SEQUENCE [LARGE SCALE GENOMIC DNA]</scope>
    <source>
        <strain>RKS4594</strain>
    </source>
</reference>
<protein>
    <recommendedName>
        <fullName evidence="1">Glycogen debranching enzyme</fullName>
        <ecNumber evidence="1">3.2.1.196</ecNumber>
    </recommendedName>
    <alternativeName>
        <fullName evidence="1">Limit dextrin alpha-1,6-maltotetraose-hydrolase</fullName>
    </alternativeName>
</protein>
<accession>C0Q0L1</accession>
<keyword id="KW-0119">Carbohydrate metabolism</keyword>
<keyword id="KW-0321">Glycogen metabolism</keyword>
<keyword id="KW-0326">Glycosidase</keyword>
<keyword id="KW-0378">Hydrolase</keyword>
<gene>
    <name evidence="1" type="primary">glgX</name>
    <name type="ordered locus">SPC_3606</name>
</gene>
<sequence>MTQLAIGEATPHGATYDGHGVNFTLFSAHAERVELCVFDSRGNERRYDLPGRRGDVWHGYLAGARPGLRYGYRVHGPWQPAQGHRFNPAKLLLDPYARRVEGELKDHPLLHGGHDEPDYRDNAAVAPKSVVISDHYDWEDDAAPRTPWGKTVIYEAHVKGLTYLHPELPQEIRGTYKALGHPVMVAYFKQLGITALELLPVAQFASEPRLQRMGLTNYWGYNPMAMFALHPAWASSPETALDEFRDAVKALHRAGIEVILDIVLNHSAELDLDGPTFSLRGIDNRSYYWIRDDGDYHNWTGCGNTLNLSHPGVVEYACECLRYWVETCHVDGFRFDLASVMGRTPTFRQDAPLFAAIKACPVLSTVKLIAEPWDIGEGGYQVGNFPPPFAEWNDHFRDAARRFWLPRNLTTGEFACRFAASSDVFKRNGRAPGASVNLLTAHDGFTLRDCVCFNQKHNEANGEENRDGTNSNYSDNHGKEGLGGPLDLMERRRDSIHALLATLLLSQGTPMLLAGDEHGHSQHGNNNAYCQDNALTWLDWQQANRGLTTFTAALIRLRQQIPALTGNSWWEEGDGNVRWLNKNAQPLSADEWQNGPKLMQILLSDRFLIAINATLEVTDIVLPEGEWRAVPPFAGEDNPVITAVWQGPAHGLCVFQRG</sequence>
<comment type="function">
    <text evidence="1">Removes maltotriose and maltotetraose chains that are attached by 1,6-alpha-linkage to the limit dextrin main chain, generating a debranched limit dextrin.</text>
</comment>
<comment type="catalytic activity">
    <reaction evidence="1">
        <text>Hydrolysis of (1-&gt;6)-alpha-D-glucosidic linkages to branches with degrees of polymerization of three or four glucose residues in limit dextrin.</text>
        <dbReference type="EC" id="3.2.1.196"/>
    </reaction>
</comment>
<comment type="pathway">
    <text evidence="1">Glycan degradation; glycogen degradation.</text>
</comment>
<comment type="similarity">
    <text evidence="1">Belongs to the glycosyl hydrolase 13 family.</text>
</comment>